<reference key="1">
    <citation type="journal article" date="1996" name="DNA Res.">
        <title>Sequence analysis of the genome of the unicellular cyanobacterium Synechocystis sp. strain PCC6803. II. Sequence determination of the entire genome and assignment of potential protein-coding regions.</title>
        <authorList>
            <person name="Kaneko T."/>
            <person name="Sato S."/>
            <person name="Kotani H."/>
            <person name="Tanaka A."/>
            <person name="Asamizu E."/>
            <person name="Nakamura Y."/>
            <person name="Miyajima N."/>
            <person name="Hirosawa M."/>
            <person name="Sugiura M."/>
            <person name="Sasamoto S."/>
            <person name="Kimura T."/>
            <person name="Hosouchi T."/>
            <person name="Matsuno A."/>
            <person name="Muraki A."/>
            <person name="Nakazaki N."/>
            <person name="Naruo K."/>
            <person name="Okumura S."/>
            <person name="Shimpo S."/>
            <person name="Takeuchi C."/>
            <person name="Wada T."/>
            <person name="Watanabe A."/>
            <person name="Yamada M."/>
            <person name="Yasuda M."/>
            <person name="Tabata S."/>
        </authorList>
    </citation>
    <scope>NUCLEOTIDE SEQUENCE [LARGE SCALE GENOMIC DNA]</scope>
    <source>
        <strain>ATCC 27184 / PCC 6803 / Kazusa</strain>
    </source>
</reference>
<reference key="2">
    <citation type="journal article" date="1997" name="Electrophoresis">
        <title>Towards a proteome project of cyanobacterium Synechocystis sp. strain PCC6803: linking 130 protein spots with their respective genes.</title>
        <authorList>
            <person name="Sazuka T."/>
            <person name="Ohara O."/>
        </authorList>
    </citation>
    <scope>PROTEIN SEQUENCE OF 2-18</scope>
</reference>
<accession>P74207</accession>
<keyword id="KW-0028">Amino-acid biosynthesis</keyword>
<keyword id="KW-0100">Branched-chain amino acid biosynthesis</keyword>
<keyword id="KW-0903">Direct protein sequencing</keyword>
<keyword id="KW-0432">Leucine biosynthesis</keyword>
<keyword id="KW-0456">Lyase</keyword>
<keyword id="KW-1185">Reference proteome</keyword>
<protein>
    <recommendedName>
        <fullName>3-isopropylmalate dehydratase small subunit</fullName>
        <ecNumber>4.2.1.33</ecNumber>
    </recommendedName>
    <alternativeName>
        <fullName>Alpha-IPM isomerase</fullName>
        <shortName>IPMI</shortName>
    </alternativeName>
    <alternativeName>
        <fullName>Isopropylmalate isomerase</fullName>
    </alternativeName>
</protein>
<feature type="initiator methionine" description="Removed" evidence="2">
    <location>
        <position position="1"/>
    </location>
</feature>
<feature type="chain" id="PRO_0000141900" description="3-isopropylmalate dehydratase small subunit">
    <location>
        <begin position="2"/>
        <end position="200"/>
    </location>
</feature>
<dbReference type="EC" id="4.2.1.33"/>
<dbReference type="EMBL" id="BA000022">
    <property type="protein sequence ID" value="BAA18298.1"/>
    <property type="molecule type" value="Genomic_DNA"/>
</dbReference>
<dbReference type="PIR" id="S75839">
    <property type="entry name" value="S75839"/>
</dbReference>
<dbReference type="SMR" id="P74207"/>
<dbReference type="FunCoup" id="P74207">
    <property type="interactions" value="396"/>
</dbReference>
<dbReference type="STRING" id="1148.gene:10499174"/>
<dbReference type="PaxDb" id="1148-1653384"/>
<dbReference type="EnsemblBacteria" id="BAA18298">
    <property type="protein sequence ID" value="BAA18298"/>
    <property type="gene ID" value="BAA18298"/>
</dbReference>
<dbReference type="KEGG" id="syn:sll1444"/>
<dbReference type="eggNOG" id="COG0066">
    <property type="taxonomic scope" value="Bacteria"/>
</dbReference>
<dbReference type="InParanoid" id="P74207"/>
<dbReference type="PhylomeDB" id="P74207"/>
<dbReference type="UniPathway" id="UPA00048">
    <property type="reaction ID" value="UER00071"/>
</dbReference>
<dbReference type="Proteomes" id="UP000001425">
    <property type="component" value="Chromosome"/>
</dbReference>
<dbReference type="GO" id="GO:0009316">
    <property type="term" value="C:3-isopropylmalate dehydratase complex"/>
    <property type="evidence" value="ECO:0007669"/>
    <property type="project" value="InterPro"/>
</dbReference>
<dbReference type="GO" id="GO:0003861">
    <property type="term" value="F:3-isopropylmalate dehydratase activity"/>
    <property type="evidence" value="ECO:0007669"/>
    <property type="project" value="UniProtKB-UniRule"/>
</dbReference>
<dbReference type="GO" id="GO:0009098">
    <property type="term" value="P:L-leucine biosynthetic process"/>
    <property type="evidence" value="ECO:0007669"/>
    <property type="project" value="UniProtKB-UniRule"/>
</dbReference>
<dbReference type="CDD" id="cd01577">
    <property type="entry name" value="IPMI_Swivel"/>
    <property type="match status" value="1"/>
</dbReference>
<dbReference type="Gene3D" id="3.20.19.10">
    <property type="entry name" value="Aconitase, domain 4"/>
    <property type="match status" value="1"/>
</dbReference>
<dbReference type="HAMAP" id="MF_01031">
    <property type="entry name" value="LeuD_type1"/>
    <property type="match status" value="1"/>
</dbReference>
<dbReference type="InterPro" id="IPR004431">
    <property type="entry name" value="3-IsopropMal_deHydase_ssu"/>
</dbReference>
<dbReference type="InterPro" id="IPR015928">
    <property type="entry name" value="Aconitase/3IPM_dehydase_swvl"/>
</dbReference>
<dbReference type="InterPro" id="IPR000573">
    <property type="entry name" value="AconitaseA/IPMdHydase_ssu_swvl"/>
</dbReference>
<dbReference type="InterPro" id="IPR033940">
    <property type="entry name" value="IPMI_Swivel"/>
</dbReference>
<dbReference type="InterPro" id="IPR050075">
    <property type="entry name" value="LeuD"/>
</dbReference>
<dbReference type="NCBIfam" id="TIGR00171">
    <property type="entry name" value="leuD"/>
    <property type="match status" value="1"/>
</dbReference>
<dbReference type="NCBIfam" id="NF002458">
    <property type="entry name" value="PRK01641.1"/>
    <property type="match status" value="1"/>
</dbReference>
<dbReference type="PANTHER" id="PTHR43345:SF5">
    <property type="entry name" value="3-ISOPROPYLMALATE DEHYDRATASE SMALL SUBUNIT"/>
    <property type="match status" value="1"/>
</dbReference>
<dbReference type="PANTHER" id="PTHR43345">
    <property type="entry name" value="3-ISOPROPYLMALATE DEHYDRATASE SMALL SUBUNIT 2-RELATED-RELATED"/>
    <property type="match status" value="1"/>
</dbReference>
<dbReference type="Pfam" id="PF00694">
    <property type="entry name" value="Aconitase_C"/>
    <property type="match status" value="1"/>
</dbReference>
<dbReference type="SUPFAM" id="SSF52016">
    <property type="entry name" value="LeuD/IlvD-like"/>
    <property type="match status" value="1"/>
</dbReference>
<proteinExistence type="evidence at protein level"/>
<name>LEUD_SYNY3</name>
<organism>
    <name type="scientific">Synechocystis sp. (strain ATCC 27184 / PCC 6803 / Kazusa)</name>
    <dbReference type="NCBI Taxonomy" id="1111708"/>
    <lineage>
        <taxon>Bacteria</taxon>
        <taxon>Bacillati</taxon>
        <taxon>Cyanobacteriota</taxon>
        <taxon>Cyanophyceae</taxon>
        <taxon>Synechococcales</taxon>
        <taxon>Merismopediaceae</taxon>
        <taxon>Synechocystis</taxon>
    </lineage>
</organism>
<sequence>MSQVKQIQGKALPLVGDDIDTDRIIPARFLRCVTFDGLGEHVFADDRQQQGGNHPFDLSQYQDATVLVVNRNFGCGSSREHAPQAIIKWGIKAIIGESFAEIFLGNCLANGVPCVTAPHGQIADLQQAITADPNLAVNLDLTTAAVTYGDRSFPVILSDGAQQMLLDGQWDTCGQLVQNQGKIAATAEKLPYLHWQTSAA</sequence>
<evidence type="ECO:0000250" key="1"/>
<evidence type="ECO:0000269" key="2">
    <source>
    </source>
</evidence>
<evidence type="ECO:0000305" key="3"/>
<comment type="function">
    <text evidence="1">Catalyzes the isomerization between 2-isopropylmalate and 3-isopropylmalate, via the formation of 2-isopropylmaleate.</text>
</comment>
<comment type="catalytic activity">
    <reaction>
        <text>(2R,3S)-3-isopropylmalate = (2S)-2-isopropylmalate</text>
        <dbReference type="Rhea" id="RHEA:32287"/>
        <dbReference type="ChEBI" id="CHEBI:1178"/>
        <dbReference type="ChEBI" id="CHEBI:35121"/>
        <dbReference type="EC" id="4.2.1.33"/>
    </reaction>
</comment>
<comment type="pathway">
    <text>Amino-acid biosynthesis; L-leucine biosynthesis; L-leucine from 3-methyl-2-oxobutanoate: step 2/4.</text>
</comment>
<comment type="subunit">
    <text evidence="1">Heterodimer of LeuC and LeuD.</text>
</comment>
<comment type="similarity">
    <text evidence="3">Belongs to the LeuD family. LeuD type 1 subfamily.</text>
</comment>
<gene>
    <name type="primary">leuD</name>
    <name type="ordered locus">sll1444</name>
</gene>